<keyword id="KW-0030">Aminoacyl-tRNA synthetase</keyword>
<keyword id="KW-0067">ATP-binding</keyword>
<keyword id="KW-0963">Cytoplasm</keyword>
<keyword id="KW-0436">Ligase</keyword>
<keyword id="KW-0547">Nucleotide-binding</keyword>
<keyword id="KW-0648">Protein biosynthesis</keyword>
<keyword id="KW-0694">RNA-binding</keyword>
<feature type="chain" id="PRO_0000234811" description="Tyrosine--tRNA ligase 1">
    <location>
        <begin position="1"/>
        <end position="422"/>
    </location>
</feature>
<feature type="domain" description="S4 RNA-binding" evidence="1">
    <location>
        <begin position="355"/>
        <end position="419"/>
    </location>
</feature>
<feature type="short sequence motif" description="'HIGH' region">
    <location>
        <begin position="41"/>
        <end position="50"/>
    </location>
</feature>
<feature type="short sequence motif" description="'KMSKS' region">
    <location>
        <begin position="233"/>
        <end position="237"/>
    </location>
</feature>
<feature type="binding site" evidence="1">
    <location>
        <position position="36"/>
    </location>
    <ligand>
        <name>L-tyrosine</name>
        <dbReference type="ChEBI" id="CHEBI:58315"/>
    </ligand>
</feature>
<feature type="binding site" evidence="1">
    <location>
        <position position="173"/>
    </location>
    <ligand>
        <name>L-tyrosine</name>
        <dbReference type="ChEBI" id="CHEBI:58315"/>
    </ligand>
</feature>
<feature type="binding site" evidence="1">
    <location>
        <position position="177"/>
    </location>
    <ligand>
        <name>L-tyrosine</name>
        <dbReference type="ChEBI" id="CHEBI:58315"/>
    </ligand>
</feature>
<feature type="binding site" evidence="1">
    <location>
        <position position="236"/>
    </location>
    <ligand>
        <name>ATP</name>
        <dbReference type="ChEBI" id="CHEBI:30616"/>
    </ligand>
</feature>
<organism>
    <name type="scientific">Vibrio vulnificus (strain CMCP6)</name>
    <dbReference type="NCBI Taxonomy" id="216895"/>
    <lineage>
        <taxon>Bacteria</taxon>
        <taxon>Pseudomonadati</taxon>
        <taxon>Pseudomonadota</taxon>
        <taxon>Gammaproteobacteria</taxon>
        <taxon>Vibrionales</taxon>
        <taxon>Vibrionaceae</taxon>
        <taxon>Vibrio</taxon>
    </lineage>
</organism>
<sequence>MNSQLLFDDLAQRGLIAQTTDLEQLIALFRQPQTLYCGFDPTAGSLHIGHLVPLIMLKRFQDAGHQGIALIGGATGMIGDPSFKASERSLNSAETVAAWVNALATQIQQLMTPHLTQPLVMVNNADWMQSIGVIAFFRDIGKHFSVNAMIQRESVKQRLARPDQGISFTEFSYSLLQSYDFAQLNQTHQCALQIGGNDQWGNIVSGIDLTRRLNGTNVHGLTLPLITKSDGTKFGKTEGGAIWLDAAKTSPYMFYQFWLNCDDADVYRFLRYYTFLSVEQIEQLEATDKAQVGKPSAQRILAEEMTRFVHGQAGLESAQRISQALFSGQLNQLNLAELKQLEQDGLPCRQLAHVSDVVTLLLETGLASSKRQAREWLENGAIRINGERWHELTLAQTFALYDQYYIVQRGKKQFAMVKLAQV</sequence>
<comment type="function">
    <text evidence="1">Catalyzes the attachment of tyrosine to tRNA(Tyr) in a two-step reaction: tyrosine is first activated by ATP to form Tyr-AMP and then transferred to the acceptor end of tRNA(Tyr).</text>
</comment>
<comment type="catalytic activity">
    <reaction evidence="1">
        <text>tRNA(Tyr) + L-tyrosine + ATP = L-tyrosyl-tRNA(Tyr) + AMP + diphosphate + H(+)</text>
        <dbReference type="Rhea" id="RHEA:10220"/>
        <dbReference type="Rhea" id="RHEA-COMP:9706"/>
        <dbReference type="Rhea" id="RHEA-COMP:9707"/>
        <dbReference type="ChEBI" id="CHEBI:15378"/>
        <dbReference type="ChEBI" id="CHEBI:30616"/>
        <dbReference type="ChEBI" id="CHEBI:33019"/>
        <dbReference type="ChEBI" id="CHEBI:58315"/>
        <dbReference type="ChEBI" id="CHEBI:78442"/>
        <dbReference type="ChEBI" id="CHEBI:78536"/>
        <dbReference type="ChEBI" id="CHEBI:456215"/>
        <dbReference type="EC" id="6.1.1.1"/>
    </reaction>
</comment>
<comment type="subunit">
    <text evidence="1">Homodimer.</text>
</comment>
<comment type="subcellular location">
    <subcellularLocation>
        <location evidence="1">Cytoplasm</location>
    </subcellularLocation>
</comment>
<comment type="similarity">
    <text evidence="1">Belongs to the class-I aminoacyl-tRNA synthetase family. TyrS type 1 subfamily.</text>
</comment>
<protein>
    <recommendedName>
        <fullName evidence="1">Tyrosine--tRNA ligase 1</fullName>
        <ecNumber evidence="1">6.1.1.1</ecNumber>
    </recommendedName>
    <alternativeName>
        <fullName evidence="1">Tyrosyl-tRNA synthetase 1</fullName>
        <shortName evidence="1">TyrRS 1</shortName>
    </alternativeName>
</protein>
<proteinExistence type="inferred from homology"/>
<name>SYY1_VIBVU</name>
<reference key="1">
    <citation type="submission" date="2002-12" db="EMBL/GenBank/DDBJ databases">
        <title>Complete genome sequence of Vibrio vulnificus CMCP6.</title>
        <authorList>
            <person name="Rhee J.H."/>
            <person name="Kim S.Y."/>
            <person name="Chung S.S."/>
            <person name="Kim J.J."/>
            <person name="Moon Y.H."/>
            <person name="Jeong H."/>
            <person name="Choy H.E."/>
        </authorList>
    </citation>
    <scope>NUCLEOTIDE SEQUENCE [LARGE SCALE GENOMIC DNA]</scope>
    <source>
        <strain>CMCP6</strain>
    </source>
</reference>
<gene>
    <name evidence="1" type="primary">tyrS1</name>
    <name type="ordered locus">VV2_0878</name>
</gene>
<evidence type="ECO:0000255" key="1">
    <source>
        <dbReference type="HAMAP-Rule" id="MF_02006"/>
    </source>
</evidence>
<accession>Q8D5N2</accession>
<dbReference type="EC" id="6.1.1.1" evidence="1"/>
<dbReference type="EMBL" id="AE016796">
    <property type="protein sequence ID" value="AAO07799.1"/>
    <property type="molecule type" value="Genomic_DNA"/>
</dbReference>
<dbReference type="RefSeq" id="WP_011081792.1">
    <property type="nucleotide sequence ID" value="NC_004460.2"/>
</dbReference>
<dbReference type="SMR" id="Q8D5N2"/>
<dbReference type="KEGG" id="vvu:VV2_0878"/>
<dbReference type="HOGENOM" id="CLU_024003_0_3_6"/>
<dbReference type="Proteomes" id="UP000002275">
    <property type="component" value="Chromosome 2"/>
</dbReference>
<dbReference type="GO" id="GO:0005829">
    <property type="term" value="C:cytosol"/>
    <property type="evidence" value="ECO:0007669"/>
    <property type="project" value="TreeGrafter"/>
</dbReference>
<dbReference type="GO" id="GO:0005524">
    <property type="term" value="F:ATP binding"/>
    <property type="evidence" value="ECO:0007669"/>
    <property type="project" value="UniProtKB-UniRule"/>
</dbReference>
<dbReference type="GO" id="GO:0003723">
    <property type="term" value="F:RNA binding"/>
    <property type="evidence" value="ECO:0007669"/>
    <property type="project" value="UniProtKB-KW"/>
</dbReference>
<dbReference type="GO" id="GO:0004831">
    <property type="term" value="F:tyrosine-tRNA ligase activity"/>
    <property type="evidence" value="ECO:0007669"/>
    <property type="project" value="UniProtKB-UniRule"/>
</dbReference>
<dbReference type="GO" id="GO:0006437">
    <property type="term" value="P:tyrosyl-tRNA aminoacylation"/>
    <property type="evidence" value="ECO:0007669"/>
    <property type="project" value="UniProtKB-UniRule"/>
</dbReference>
<dbReference type="CDD" id="cd00165">
    <property type="entry name" value="S4"/>
    <property type="match status" value="1"/>
</dbReference>
<dbReference type="CDD" id="cd00805">
    <property type="entry name" value="TyrRS_core"/>
    <property type="match status" value="1"/>
</dbReference>
<dbReference type="FunFam" id="1.10.240.10:FF:000001">
    <property type="entry name" value="Tyrosine--tRNA ligase"/>
    <property type="match status" value="1"/>
</dbReference>
<dbReference type="FunFam" id="3.40.50.620:FF:000008">
    <property type="entry name" value="Tyrosine--tRNA ligase"/>
    <property type="match status" value="1"/>
</dbReference>
<dbReference type="Gene3D" id="3.40.50.620">
    <property type="entry name" value="HUPs"/>
    <property type="match status" value="1"/>
</dbReference>
<dbReference type="Gene3D" id="3.10.290.10">
    <property type="entry name" value="RNA-binding S4 domain"/>
    <property type="match status" value="1"/>
</dbReference>
<dbReference type="Gene3D" id="1.10.240.10">
    <property type="entry name" value="Tyrosyl-Transfer RNA Synthetase"/>
    <property type="match status" value="1"/>
</dbReference>
<dbReference type="HAMAP" id="MF_02006">
    <property type="entry name" value="Tyr_tRNA_synth_type1"/>
    <property type="match status" value="1"/>
</dbReference>
<dbReference type="InterPro" id="IPR001412">
    <property type="entry name" value="aa-tRNA-synth_I_CS"/>
</dbReference>
<dbReference type="InterPro" id="IPR002305">
    <property type="entry name" value="aa-tRNA-synth_Ic"/>
</dbReference>
<dbReference type="InterPro" id="IPR014729">
    <property type="entry name" value="Rossmann-like_a/b/a_fold"/>
</dbReference>
<dbReference type="InterPro" id="IPR036986">
    <property type="entry name" value="S4_RNA-bd_sf"/>
</dbReference>
<dbReference type="InterPro" id="IPR054608">
    <property type="entry name" value="SYY-like_C"/>
</dbReference>
<dbReference type="InterPro" id="IPR002307">
    <property type="entry name" value="Tyr-tRNA-ligase"/>
</dbReference>
<dbReference type="InterPro" id="IPR024088">
    <property type="entry name" value="Tyr-tRNA-ligase_bac-type"/>
</dbReference>
<dbReference type="InterPro" id="IPR024107">
    <property type="entry name" value="Tyr-tRNA-ligase_bac_1"/>
</dbReference>
<dbReference type="NCBIfam" id="TIGR00234">
    <property type="entry name" value="tyrS"/>
    <property type="match status" value="1"/>
</dbReference>
<dbReference type="PANTHER" id="PTHR11766:SF0">
    <property type="entry name" value="TYROSINE--TRNA LIGASE, MITOCHONDRIAL"/>
    <property type="match status" value="1"/>
</dbReference>
<dbReference type="PANTHER" id="PTHR11766">
    <property type="entry name" value="TYROSYL-TRNA SYNTHETASE"/>
    <property type="match status" value="1"/>
</dbReference>
<dbReference type="Pfam" id="PF22421">
    <property type="entry name" value="SYY_C-terminal"/>
    <property type="match status" value="1"/>
</dbReference>
<dbReference type="Pfam" id="PF00579">
    <property type="entry name" value="tRNA-synt_1b"/>
    <property type="match status" value="1"/>
</dbReference>
<dbReference type="PRINTS" id="PR01040">
    <property type="entry name" value="TRNASYNTHTYR"/>
</dbReference>
<dbReference type="SUPFAM" id="SSF55174">
    <property type="entry name" value="Alpha-L RNA-binding motif"/>
    <property type="match status" value="1"/>
</dbReference>
<dbReference type="SUPFAM" id="SSF52374">
    <property type="entry name" value="Nucleotidylyl transferase"/>
    <property type="match status" value="1"/>
</dbReference>
<dbReference type="PROSITE" id="PS00178">
    <property type="entry name" value="AA_TRNA_LIGASE_I"/>
    <property type="match status" value="1"/>
</dbReference>
<dbReference type="PROSITE" id="PS50889">
    <property type="entry name" value="S4"/>
    <property type="match status" value="1"/>
</dbReference>